<keyword id="KW-0131">Cell cycle</keyword>
<keyword id="KW-0132">Cell division</keyword>
<keyword id="KW-0997">Cell inner membrane</keyword>
<keyword id="KW-1003">Cell membrane</keyword>
<keyword id="KW-0133">Cell shape</keyword>
<keyword id="KW-0961">Cell wall biogenesis/degradation</keyword>
<keyword id="KW-0460">Magnesium</keyword>
<keyword id="KW-0472">Membrane</keyword>
<keyword id="KW-0479">Metal-binding</keyword>
<keyword id="KW-0573">Peptidoglycan synthesis</keyword>
<keyword id="KW-1185">Reference proteome</keyword>
<keyword id="KW-0808">Transferase</keyword>
<keyword id="KW-0812">Transmembrane</keyword>
<keyword id="KW-1133">Transmembrane helix</keyword>
<proteinExistence type="inferred from homology"/>
<protein>
    <recommendedName>
        <fullName evidence="1">Phospho-N-acetylmuramoyl-pentapeptide-transferase</fullName>
        <ecNumber evidence="1">2.7.8.13</ecNumber>
    </recommendedName>
    <alternativeName>
        <fullName evidence="1">UDP-MurNAc-pentapeptide phosphotransferase</fullName>
    </alternativeName>
</protein>
<comment type="function">
    <text evidence="1">Catalyzes the initial step of the lipid cycle reactions in the biosynthesis of the cell wall peptidoglycan: transfers peptidoglycan precursor phospho-MurNAc-pentapeptide from UDP-MurNAc-pentapeptide onto the lipid carrier undecaprenyl phosphate, yielding undecaprenyl-pyrophosphoryl-MurNAc-pentapeptide, known as lipid I.</text>
</comment>
<comment type="catalytic activity">
    <reaction evidence="1">
        <text>UDP-N-acetyl-alpha-D-muramoyl-L-alanyl-gamma-D-glutamyl-meso-2,6-diaminopimeloyl-D-alanyl-D-alanine + di-trans,octa-cis-undecaprenyl phosphate = di-trans,octa-cis-undecaprenyl diphospho-N-acetyl-alpha-D-muramoyl-L-alanyl-D-glutamyl-meso-2,6-diaminopimeloyl-D-alanyl-D-alanine + UMP</text>
        <dbReference type="Rhea" id="RHEA:28386"/>
        <dbReference type="ChEBI" id="CHEBI:57865"/>
        <dbReference type="ChEBI" id="CHEBI:60392"/>
        <dbReference type="ChEBI" id="CHEBI:61386"/>
        <dbReference type="ChEBI" id="CHEBI:61387"/>
        <dbReference type="EC" id="2.7.8.13"/>
    </reaction>
</comment>
<comment type="cofactor">
    <cofactor evidence="1">
        <name>Mg(2+)</name>
        <dbReference type="ChEBI" id="CHEBI:18420"/>
    </cofactor>
</comment>
<comment type="pathway">
    <text evidence="1">Cell wall biogenesis; peptidoglycan biosynthesis.</text>
</comment>
<comment type="subcellular location">
    <subcellularLocation>
        <location evidence="1">Cell inner membrane</location>
        <topology evidence="1">Multi-pass membrane protein</topology>
    </subcellularLocation>
</comment>
<comment type="similarity">
    <text evidence="1">Belongs to the glycosyltransferase 4 family. MraY subfamily.</text>
</comment>
<gene>
    <name evidence="1" type="primary">mraY</name>
    <name type="ordered locus">Plut_2113</name>
</gene>
<sequence length="368" mass="40785">MLYYLLHYFNSTYNPPGLGVVEYLTFRASAAAITSLLITLLAGPGFIRYLRSRFIEPVKEEAPAEHRKKKDLPTMGGLLIIFSIEVSVLLWSKFDDPHVWLIMLAVLWMGVVGFIDDYRKVVLKVKGGLSPRWKLVAQVALGLVVGIYTSLDPAFSVLMRETSVPFFKNLTIDYGYFYIPVVIFIITALSNAVNLTDGLDGLASGSSAIVVFALGGFAYLAGNAVYATYLSIPFIPGGGEIAVVCMAIVMASVGFLWFNSNPAEIFMGDTGSLALGSAIAVIALLIKQELLLPVLAGVFLLETLSVSVQVLYFKYTRMRFGQGRRIFLMAPLHHHFQLKGWAEQKIVIRFWIITILFFLTSLMTLKLR</sequence>
<evidence type="ECO:0000255" key="1">
    <source>
        <dbReference type="HAMAP-Rule" id="MF_00038"/>
    </source>
</evidence>
<organism>
    <name type="scientific">Chlorobium luteolum (strain DSM 273 / BCRC 81028 / 2530)</name>
    <name type="common">Pelodictyon luteolum</name>
    <dbReference type="NCBI Taxonomy" id="319225"/>
    <lineage>
        <taxon>Bacteria</taxon>
        <taxon>Pseudomonadati</taxon>
        <taxon>Chlorobiota</taxon>
        <taxon>Chlorobiia</taxon>
        <taxon>Chlorobiales</taxon>
        <taxon>Chlorobiaceae</taxon>
        <taxon>Chlorobium/Pelodictyon group</taxon>
        <taxon>Pelodictyon</taxon>
    </lineage>
</organism>
<accession>Q3B126</accession>
<name>MRAY_CHLL3</name>
<reference key="1">
    <citation type="submission" date="2005-08" db="EMBL/GenBank/DDBJ databases">
        <title>Complete sequence of Pelodictyon luteolum DSM 273.</title>
        <authorList>
            <consortium name="US DOE Joint Genome Institute"/>
            <person name="Copeland A."/>
            <person name="Lucas S."/>
            <person name="Lapidus A."/>
            <person name="Barry K."/>
            <person name="Detter J.C."/>
            <person name="Glavina T."/>
            <person name="Hammon N."/>
            <person name="Israni S."/>
            <person name="Pitluck S."/>
            <person name="Bryant D."/>
            <person name="Schmutz J."/>
            <person name="Larimer F."/>
            <person name="Land M."/>
            <person name="Kyrpides N."/>
            <person name="Ivanova N."/>
            <person name="Richardson P."/>
        </authorList>
    </citation>
    <scope>NUCLEOTIDE SEQUENCE [LARGE SCALE GENOMIC DNA]</scope>
    <source>
        <strain>DSM 273 / BCRC 81028 / 2530</strain>
    </source>
</reference>
<dbReference type="EC" id="2.7.8.13" evidence="1"/>
<dbReference type="EMBL" id="CP000096">
    <property type="protein sequence ID" value="ABB24955.1"/>
    <property type="molecule type" value="Genomic_DNA"/>
</dbReference>
<dbReference type="RefSeq" id="WP_011358825.1">
    <property type="nucleotide sequence ID" value="NC_007512.1"/>
</dbReference>
<dbReference type="SMR" id="Q3B126"/>
<dbReference type="STRING" id="319225.Plut_2113"/>
<dbReference type="KEGG" id="plt:Plut_2113"/>
<dbReference type="eggNOG" id="COG0472">
    <property type="taxonomic scope" value="Bacteria"/>
</dbReference>
<dbReference type="HOGENOM" id="CLU_023982_0_0_10"/>
<dbReference type="OrthoDB" id="9805475at2"/>
<dbReference type="UniPathway" id="UPA00219"/>
<dbReference type="Proteomes" id="UP000002709">
    <property type="component" value="Chromosome"/>
</dbReference>
<dbReference type="GO" id="GO:0005886">
    <property type="term" value="C:plasma membrane"/>
    <property type="evidence" value="ECO:0007669"/>
    <property type="project" value="UniProtKB-SubCell"/>
</dbReference>
<dbReference type="GO" id="GO:0046872">
    <property type="term" value="F:metal ion binding"/>
    <property type="evidence" value="ECO:0007669"/>
    <property type="project" value="UniProtKB-KW"/>
</dbReference>
<dbReference type="GO" id="GO:0008963">
    <property type="term" value="F:phospho-N-acetylmuramoyl-pentapeptide-transferase activity"/>
    <property type="evidence" value="ECO:0007669"/>
    <property type="project" value="UniProtKB-UniRule"/>
</dbReference>
<dbReference type="GO" id="GO:0051992">
    <property type="term" value="F:UDP-N-acetylmuramoyl-L-alanyl-D-glutamyl-meso-2,6-diaminopimelyl-D-alanyl-D-alanine:undecaprenyl-phosphate transferase activity"/>
    <property type="evidence" value="ECO:0007669"/>
    <property type="project" value="RHEA"/>
</dbReference>
<dbReference type="GO" id="GO:0051301">
    <property type="term" value="P:cell division"/>
    <property type="evidence" value="ECO:0007669"/>
    <property type="project" value="UniProtKB-KW"/>
</dbReference>
<dbReference type="GO" id="GO:0071555">
    <property type="term" value="P:cell wall organization"/>
    <property type="evidence" value="ECO:0007669"/>
    <property type="project" value="UniProtKB-KW"/>
</dbReference>
<dbReference type="GO" id="GO:0009252">
    <property type="term" value="P:peptidoglycan biosynthetic process"/>
    <property type="evidence" value="ECO:0007669"/>
    <property type="project" value="UniProtKB-UniRule"/>
</dbReference>
<dbReference type="GO" id="GO:0008360">
    <property type="term" value="P:regulation of cell shape"/>
    <property type="evidence" value="ECO:0007669"/>
    <property type="project" value="UniProtKB-KW"/>
</dbReference>
<dbReference type="CDD" id="cd06852">
    <property type="entry name" value="GT_MraY"/>
    <property type="match status" value="1"/>
</dbReference>
<dbReference type="HAMAP" id="MF_00038">
    <property type="entry name" value="MraY"/>
    <property type="match status" value="1"/>
</dbReference>
<dbReference type="InterPro" id="IPR000715">
    <property type="entry name" value="Glycosyl_transferase_4"/>
</dbReference>
<dbReference type="InterPro" id="IPR003524">
    <property type="entry name" value="PNAcMuramoyl-5peptid_Trfase"/>
</dbReference>
<dbReference type="InterPro" id="IPR018480">
    <property type="entry name" value="PNAcMuramoyl-5peptid_Trfase_CS"/>
</dbReference>
<dbReference type="NCBIfam" id="TIGR00445">
    <property type="entry name" value="mraY"/>
    <property type="match status" value="1"/>
</dbReference>
<dbReference type="PANTHER" id="PTHR22926">
    <property type="entry name" value="PHOSPHO-N-ACETYLMURAMOYL-PENTAPEPTIDE-TRANSFERASE"/>
    <property type="match status" value="1"/>
</dbReference>
<dbReference type="PANTHER" id="PTHR22926:SF5">
    <property type="entry name" value="PHOSPHO-N-ACETYLMURAMOYL-PENTAPEPTIDE-TRANSFERASE HOMOLOG"/>
    <property type="match status" value="1"/>
</dbReference>
<dbReference type="Pfam" id="PF00953">
    <property type="entry name" value="Glycos_transf_4"/>
    <property type="match status" value="1"/>
</dbReference>
<dbReference type="PROSITE" id="PS01348">
    <property type="entry name" value="MRAY_2"/>
    <property type="match status" value="1"/>
</dbReference>
<feature type="chain" id="PRO_0000235465" description="Phospho-N-acetylmuramoyl-pentapeptide-transferase">
    <location>
        <begin position="1"/>
        <end position="368"/>
    </location>
</feature>
<feature type="transmembrane region" description="Helical" evidence="1">
    <location>
        <begin position="30"/>
        <end position="50"/>
    </location>
</feature>
<feature type="transmembrane region" description="Helical" evidence="1">
    <location>
        <begin position="72"/>
        <end position="92"/>
    </location>
</feature>
<feature type="transmembrane region" description="Helical" evidence="1">
    <location>
        <begin position="98"/>
        <end position="118"/>
    </location>
</feature>
<feature type="transmembrane region" description="Helical" evidence="1">
    <location>
        <begin position="139"/>
        <end position="159"/>
    </location>
</feature>
<feature type="transmembrane region" description="Helical" evidence="1">
    <location>
        <begin position="170"/>
        <end position="190"/>
    </location>
</feature>
<feature type="transmembrane region" description="Helical" evidence="1">
    <location>
        <begin position="208"/>
        <end position="228"/>
    </location>
</feature>
<feature type="transmembrane region" description="Helical" evidence="1">
    <location>
        <begin position="238"/>
        <end position="258"/>
    </location>
</feature>
<feature type="transmembrane region" description="Helical" evidence="1">
    <location>
        <begin position="264"/>
        <end position="286"/>
    </location>
</feature>
<feature type="transmembrane region" description="Helical" evidence="1">
    <location>
        <begin position="345"/>
        <end position="365"/>
    </location>
</feature>